<sequence>MSGCRVFIGRLNPAAREKDVERFFKGYGRIRDIDLKRGFGFVEFEDPRDADDAVYELDGKELCSERVTIEHARARSRGGRGRGRYSDRFSSRRPRNDRRNAPPVRTENRLIVENLSSRVSWQDLKDFMRQAGEVTFADAHRPKLNEGVVEFASYGDLKNAIEKLSGKEINGRKIKLIEGSKRHRSRSRSRSRTRSSSRSRSRSRSRRSKSYSRSRSRSRSRSKSRSGSRSPVPEKSQKRGSSSRSKSPASVDRQRSRSRSRSRSVDSGN</sequence>
<proteinExistence type="evidence at protein level"/>
<dbReference type="EMBL" id="L13635">
    <property type="protein sequence ID" value="AAA62266.1"/>
    <property type="molecule type" value="mRNA"/>
</dbReference>
<dbReference type="EMBL" id="AF020683">
    <property type="protein sequence ID" value="AAB71864.1"/>
    <property type="molecule type" value="mRNA"/>
</dbReference>
<dbReference type="EMBL" id="BC058479">
    <property type="protein sequence ID" value="AAH58479.1"/>
    <property type="molecule type" value="mRNA"/>
</dbReference>
<dbReference type="EMBL" id="L33267">
    <property type="protein sequence ID" value="AAA42316.1"/>
    <property type="molecule type" value="mRNA"/>
</dbReference>
<dbReference type="PIR" id="B47112">
    <property type="entry name" value="B47112"/>
</dbReference>
<dbReference type="RefSeq" id="NP_001182434.1">
    <molecule id="Q09167-1"/>
    <property type="nucleotide sequence ID" value="NM_001195505.1"/>
</dbReference>
<dbReference type="RefSeq" id="NP_001182435.1">
    <molecule id="Q09167-1"/>
    <property type="nucleotide sequence ID" value="NM_001195506.1"/>
</dbReference>
<dbReference type="RefSeq" id="NP_062130.2">
    <molecule id="Q09167-1"/>
    <property type="nucleotide sequence ID" value="NM_019257.3"/>
</dbReference>
<dbReference type="RefSeq" id="XP_063117657.1">
    <molecule id="Q09167-1"/>
    <property type="nucleotide sequence ID" value="XM_063261587.1"/>
</dbReference>
<dbReference type="SMR" id="Q09167"/>
<dbReference type="BioGRID" id="248288">
    <property type="interactions" value="2"/>
</dbReference>
<dbReference type="FunCoup" id="Q09167">
    <property type="interactions" value="3479"/>
</dbReference>
<dbReference type="STRING" id="10116.ENSRNOP00000007583"/>
<dbReference type="iPTMnet" id="Q09167"/>
<dbReference type="PhosphoSitePlus" id="Q09167"/>
<dbReference type="jPOST" id="Q09167"/>
<dbReference type="PaxDb" id="10116-ENSRNOP00000007583"/>
<dbReference type="DNASU" id="29667"/>
<dbReference type="Ensembl" id="ENSRNOT00000107441.1">
    <molecule id="Q09167-1"/>
    <property type="protein sequence ID" value="ENSRNOP00000087250.1"/>
    <property type="gene ID" value="ENSRNOG00000005513.8"/>
</dbReference>
<dbReference type="GeneID" id="29667"/>
<dbReference type="KEGG" id="rno:29667"/>
<dbReference type="UCSC" id="RGD:3664">
    <molecule id="Q09167-1"/>
    <property type="organism name" value="rat"/>
</dbReference>
<dbReference type="AGR" id="RGD:3664"/>
<dbReference type="CTD" id="6430"/>
<dbReference type="RGD" id="3664">
    <property type="gene designation" value="Srsf5"/>
</dbReference>
<dbReference type="eggNOG" id="KOG0106">
    <property type="taxonomic scope" value="Eukaryota"/>
</dbReference>
<dbReference type="GeneTree" id="ENSGT00940000158275"/>
<dbReference type="HOGENOM" id="CLU_012062_34_2_1"/>
<dbReference type="InParanoid" id="Q09167"/>
<dbReference type="OrthoDB" id="1099063at2759"/>
<dbReference type="PhylomeDB" id="Q09167"/>
<dbReference type="TreeFam" id="TF351335"/>
<dbReference type="Reactome" id="R-RNO-159236">
    <property type="pathway name" value="Transport of Mature mRNA derived from an Intron-Containing Transcript"/>
</dbReference>
<dbReference type="Reactome" id="R-RNO-72163">
    <property type="pathway name" value="mRNA Splicing - Major Pathway"/>
</dbReference>
<dbReference type="Reactome" id="R-RNO-72187">
    <property type="pathway name" value="mRNA 3'-end processing"/>
</dbReference>
<dbReference type="Reactome" id="R-RNO-72203">
    <property type="pathway name" value="Processing of Capped Intron-Containing Pre-mRNA"/>
</dbReference>
<dbReference type="Reactome" id="R-RNO-73856">
    <property type="pathway name" value="RNA Polymerase II Transcription Termination"/>
</dbReference>
<dbReference type="PRO" id="PR:Q09167"/>
<dbReference type="Proteomes" id="UP000002494">
    <property type="component" value="Chromosome 6"/>
</dbReference>
<dbReference type="Bgee" id="ENSRNOG00000005513">
    <property type="expression patterns" value="Expressed in thymus and 19 other cell types or tissues"/>
</dbReference>
<dbReference type="GO" id="GO:0005829">
    <property type="term" value="C:cytosol"/>
    <property type="evidence" value="ECO:0007669"/>
    <property type="project" value="Ensembl"/>
</dbReference>
<dbReference type="GO" id="GO:0016607">
    <property type="term" value="C:nuclear speck"/>
    <property type="evidence" value="ECO:0000250"/>
    <property type="project" value="UniProtKB"/>
</dbReference>
<dbReference type="GO" id="GO:0005730">
    <property type="term" value="C:nucleolus"/>
    <property type="evidence" value="ECO:0007669"/>
    <property type="project" value="Ensembl"/>
</dbReference>
<dbReference type="GO" id="GO:0043422">
    <property type="term" value="F:protein kinase B binding"/>
    <property type="evidence" value="ECO:0000353"/>
    <property type="project" value="RGD"/>
</dbReference>
<dbReference type="GO" id="GO:0003723">
    <property type="term" value="F:RNA binding"/>
    <property type="evidence" value="ECO:0000314"/>
    <property type="project" value="RGD"/>
</dbReference>
<dbReference type="GO" id="GO:0050733">
    <property type="term" value="F:RS domain binding"/>
    <property type="evidence" value="ECO:0000266"/>
    <property type="project" value="RGD"/>
</dbReference>
<dbReference type="GO" id="GO:0032869">
    <property type="term" value="P:cellular response to insulin stimulus"/>
    <property type="evidence" value="ECO:0000270"/>
    <property type="project" value="RGD"/>
</dbReference>
<dbReference type="GO" id="GO:0001889">
    <property type="term" value="P:liver development"/>
    <property type="evidence" value="ECO:0000270"/>
    <property type="project" value="RGD"/>
</dbReference>
<dbReference type="GO" id="GO:0097421">
    <property type="term" value="P:liver regeneration"/>
    <property type="evidence" value="ECO:0000270"/>
    <property type="project" value="RGD"/>
</dbReference>
<dbReference type="GO" id="GO:0000398">
    <property type="term" value="P:mRNA splicing, via spliceosome"/>
    <property type="evidence" value="ECO:0000318"/>
    <property type="project" value="GO_Central"/>
</dbReference>
<dbReference type="GO" id="GO:0033120">
    <property type="term" value="P:positive regulation of RNA splicing"/>
    <property type="evidence" value="ECO:0000315"/>
    <property type="project" value="RGD"/>
</dbReference>
<dbReference type="GO" id="GO:0032868">
    <property type="term" value="P:response to insulin"/>
    <property type="evidence" value="ECO:0000314"/>
    <property type="project" value="RGD"/>
</dbReference>
<dbReference type="GO" id="GO:0009611">
    <property type="term" value="P:response to wounding"/>
    <property type="evidence" value="ECO:0000266"/>
    <property type="project" value="RGD"/>
</dbReference>
<dbReference type="CDD" id="cd12595">
    <property type="entry name" value="RRM1_SRSF5"/>
    <property type="match status" value="1"/>
</dbReference>
<dbReference type="CDD" id="cd12765">
    <property type="entry name" value="RRM2_SRSF5"/>
    <property type="match status" value="1"/>
</dbReference>
<dbReference type="FunFam" id="3.30.70.330:FF:000028">
    <property type="entry name" value="Putative serine/arginine-rich splicing factor 4"/>
    <property type="match status" value="1"/>
</dbReference>
<dbReference type="FunFam" id="3.30.70.330:FF:000138">
    <property type="entry name" value="Serine/arginine-rich splicing factor 5 alpha"/>
    <property type="match status" value="1"/>
</dbReference>
<dbReference type="Gene3D" id="3.30.70.330">
    <property type="match status" value="2"/>
</dbReference>
<dbReference type="InterPro" id="IPR012677">
    <property type="entry name" value="Nucleotide-bd_a/b_plait_sf"/>
</dbReference>
<dbReference type="InterPro" id="IPR035979">
    <property type="entry name" value="RBD_domain_sf"/>
</dbReference>
<dbReference type="InterPro" id="IPR000504">
    <property type="entry name" value="RRM_dom"/>
</dbReference>
<dbReference type="InterPro" id="IPR050374">
    <property type="entry name" value="RRT5_SRSF_SR"/>
</dbReference>
<dbReference type="PANTHER" id="PTHR23003">
    <property type="entry name" value="RNA RECOGNITION MOTIF RRM DOMAIN CONTAINING PROTEIN"/>
    <property type="match status" value="1"/>
</dbReference>
<dbReference type="PANTHER" id="PTHR23003:SF59">
    <property type="entry name" value="SERINE AND ARGININE RICH SPLICING FACTOR 5"/>
    <property type="match status" value="1"/>
</dbReference>
<dbReference type="Pfam" id="PF00076">
    <property type="entry name" value="RRM_1"/>
    <property type="match status" value="2"/>
</dbReference>
<dbReference type="SMART" id="SM00360">
    <property type="entry name" value="RRM"/>
    <property type="match status" value="2"/>
</dbReference>
<dbReference type="SUPFAM" id="SSF54928">
    <property type="entry name" value="RNA-binding domain, RBD"/>
    <property type="match status" value="1"/>
</dbReference>
<dbReference type="PROSITE" id="PS50102">
    <property type="entry name" value="RRM"/>
    <property type="match status" value="2"/>
</dbReference>
<reference key="1">
    <citation type="journal article" date="1993" name="J. Biol. Chem.">
        <title>Novel delayed-early and highly insulin-induced growth response genes. Identification of HRS, a potential regulator of alternative pre-mRNA splicing.</title>
        <authorList>
            <person name="Diamond R.H."/>
            <person name="Du K."/>
            <person name="Lee V.M."/>
            <person name="Mohn K.L."/>
            <person name="Haber B.A."/>
            <person name="Tewari D.S."/>
            <person name="Taub R."/>
        </authorList>
    </citation>
    <scope>NUCLEOTIDE SEQUENCE [MRNA]</scope>
    <source>
        <tissue>Liver</tissue>
    </source>
</reference>
<reference key="2">
    <citation type="journal article" date="1997" name="Gene">
        <title>Alternative splicing and structure of the human and mouse SFRS5/HRS/SRp40 genes.</title>
        <authorList>
            <person name="Du K."/>
            <person name="Taub R."/>
        </authorList>
    </citation>
    <scope>NUCLEOTIDE SEQUENCE [MRNA] (ISOFORM 2)</scope>
    <source>
        <tissue>Thymus</tissue>
    </source>
</reference>
<reference key="3">
    <citation type="journal article" date="2004" name="Genome Res.">
        <title>The status, quality, and expansion of the NIH full-length cDNA project: the Mammalian Gene Collection (MGC).</title>
        <authorList>
            <consortium name="The MGC Project Team"/>
        </authorList>
    </citation>
    <scope>NUCLEOTIDE SEQUENCE [LARGE SCALE MRNA] (ISOFORM 1)</scope>
    <source>
        <tissue>Pituitary</tissue>
    </source>
</reference>
<reference key="4">
    <citation type="journal article" date="1994" name="Endocrinology">
        <title>Cloning of rat Sertoli cell follicle-stimulating hormone primary response complementary deoxyribonucleic acid: regulation of TSC-22 gene expression.</title>
        <authorList>
            <person name="Hamil K.G."/>
            <person name="Hall S.H."/>
        </authorList>
    </citation>
    <scope>NUCLEOTIDE SEQUENCE [MRNA] OF 185-269</scope>
    <source>
        <strain>Sprague-Dawley</strain>
        <tissue>Testis</tissue>
    </source>
</reference>
<reference key="5">
    <citation type="journal article" date="2012" name="Nat. Commun.">
        <title>Quantitative maps of protein phosphorylation sites across 14 different rat organs and tissues.</title>
        <authorList>
            <person name="Lundby A."/>
            <person name="Secher A."/>
            <person name="Lage K."/>
            <person name="Nordsborg N.B."/>
            <person name="Dmytriyev A."/>
            <person name="Lundby C."/>
            <person name="Olsen J.V."/>
        </authorList>
    </citation>
    <scope>PHOSPHORYLATION [LARGE SCALE ANALYSIS] AT SER-250</scope>
    <scope>IDENTIFICATION BY MASS SPECTROMETRY [LARGE SCALE ANALYSIS]</scope>
</reference>
<comment type="function">
    <text evidence="1">May be required for progression through G1 and entry into S phase of cell growth. May play a regulatory role in pre-mRNA splicing. Autoregulates its own expression. Plays a role in constitutive splicing and can modulate the selection of alternative splice sites (By similarity). Could play an important role in development and differentiation in the spleen and thymus.</text>
</comment>
<comment type="subunit">
    <text evidence="1">Found in a pre-mRNA splicing complex with SRSF4/SFRS4, SRSF5/SFRS5, SNRNP70, SNRPA1, SRRM1 and SRRM2. Interacts (via RS domain) with PHF5A (via N-terminus) (By similarity).</text>
</comment>
<comment type="subcellular location">
    <subcellularLocation>
        <location evidence="6">Nucleus</location>
    </subcellularLocation>
</comment>
<comment type="alternative products">
    <event type="alternative splicing"/>
    <isoform>
        <id>Q09167-1</id>
        <name>1</name>
        <sequence type="displayed"/>
    </isoform>
    <isoform>
        <id>Q09167-2</id>
        <name>2</name>
        <name>HRR-LF</name>
        <sequence type="described" ref="VSP_005867 VSP_005868"/>
    </isoform>
</comment>
<comment type="tissue specificity">
    <text>Highly expressed in spleen and thymus.</text>
</comment>
<comment type="induction">
    <text>By insulin and hepatectomy.</text>
</comment>
<comment type="PTM">
    <text evidence="1">Extensively phosphorylated on serine residues in the RS domain.</text>
</comment>
<comment type="similarity">
    <text evidence="6">Belongs to the splicing factor SR family.</text>
</comment>
<name>SRSF5_RAT</name>
<protein>
    <recommendedName>
        <fullName>Serine/arginine-rich splicing factor 5</fullName>
    </recommendedName>
    <alternativeName>
        <fullName>Delayed-early protein HRS</fullName>
    </alternativeName>
    <alternativeName>
        <fullName>Insulin-induced growth response protein CL-4</fullName>
    </alternativeName>
    <alternativeName>
        <fullName>Pre-mRNA-splicing factor SRP40</fullName>
    </alternativeName>
    <alternativeName>
        <fullName>Splicing factor, arginine/serine-rich 5</fullName>
    </alternativeName>
</protein>
<gene>
    <name type="primary">Srsf5</name>
    <name type="synonym">Cl-4</name>
    <name type="synonym">Hrs</name>
    <name type="synonym">Sfrs5</name>
</gene>
<evidence type="ECO:0000250" key="1"/>
<evidence type="ECO:0000250" key="2">
    <source>
        <dbReference type="UniProtKB" id="Q13243"/>
    </source>
</evidence>
<evidence type="ECO:0000255" key="3">
    <source>
        <dbReference type="PROSITE-ProRule" id="PRU00176"/>
    </source>
</evidence>
<evidence type="ECO:0000256" key="4">
    <source>
        <dbReference type="SAM" id="MobiDB-lite"/>
    </source>
</evidence>
<evidence type="ECO:0000303" key="5">
    <source>
    </source>
</evidence>
<evidence type="ECO:0000305" key="6"/>
<evidence type="ECO:0007744" key="7">
    <source>
    </source>
</evidence>
<accession>Q09167</accession>
<accession>O35335</accession>
<keyword id="KW-0007">Acetylation</keyword>
<keyword id="KW-0025">Alternative splicing</keyword>
<keyword id="KW-0507">mRNA processing</keyword>
<keyword id="KW-0508">mRNA splicing</keyword>
<keyword id="KW-0539">Nucleus</keyword>
<keyword id="KW-0597">Phosphoprotein</keyword>
<keyword id="KW-1185">Reference proteome</keyword>
<keyword id="KW-0677">Repeat</keyword>
<keyword id="KW-0694">RNA-binding</keyword>
<keyword id="KW-0804">Transcription</keyword>
<keyword id="KW-0805">Transcription regulation</keyword>
<feature type="chain" id="PRO_0000081929" description="Serine/arginine-rich splicing factor 5">
    <location>
        <begin position="1"/>
        <end position="269"/>
    </location>
</feature>
<feature type="domain" description="RRM 1" evidence="3">
    <location>
        <begin position="4"/>
        <end position="74"/>
    </location>
</feature>
<feature type="domain" description="RRM 2" evidence="3">
    <location>
        <begin position="108"/>
        <end position="181"/>
    </location>
</feature>
<feature type="region of interest" description="Disordered" evidence="4">
    <location>
        <begin position="73"/>
        <end position="105"/>
    </location>
</feature>
<feature type="region of interest" description="Disordered" evidence="4">
    <location>
        <begin position="174"/>
        <end position="269"/>
    </location>
</feature>
<feature type="compositionally biased region" description="Basic residues" evidence="4">
    <location>
        <begin position="74"/>
        <end position="83"/>
    </location>
</feature>
<feature type="compositionally biased region" description="Basic residues" evidence="4">
    <location>
        <begin position="181"/>
        <end position="226"/>
    </location>
</feature>
<feature type="compositionally biased region" description="Low complexity" evidence="4">
    <location>
        <begin position="239"/>
        <end position="251"/>
    </location>
</feature>
<feature type="modified residue" description="Phosphoserine" evidence="2">
    <location>
        <position position="86"/>
    </location>
</feature>
<feature type="modified residue" description="N6-acetyllysine" evidence="2">
    <location>
        <position position="167"/>
    </location>
</feature>
<feature type="modified residue" description="Phosphoserine" evidence="2">
    <location>
        <position position="224"/>
    </location>
</feature>
<feature type="modified residue" description="Phosphoserine" evidence="2">
    <location>
        <position position="226"/>
    </location>
</feature>
<feature type="modified residue" description="Phosphoserine" evidence="2">
    <location>
        <position position="230"/>
    </location>
</feature>
<feature type="modified residue" description="Phosphoserine" evidence="2">
    <location>
        <position position="247"/>
    </location>
</feature>
<feature type="modified residue" description="Phosphoserine" evidence="7">
    <location>
        <position position="250"/>
    </location>
</feature>
<feature type="splice variant" id="VSP_005867" description="In isoform 2." evidence="5">
    <original>DL</original>
    <variation>VC</variation>
    <location>
        <begin position="123"/>
        <end position="124"/>
    </location>
</feature>
<feature type="splice variant" id="VSP_005868" description="In isoform 2." evidence="5">
    <location>
        <begin position="125"/>
        <end position="269"/>
    </location>
</feature>
<feature type="sequence conflict" description="In Ref. 2; AAB71864." evidence="6" ref="2">
    <original>I</original>
    <variation>M</variation>
    <location>
        <position position="69"/>
    </location>
</feature>
<organism>
    <name type="scientific">Rattus norvegicus</name>
    <name type="common">Rat</name>
    <dbReference type="NCBI Taxonomy" id="10116"/>
    <lineage>
        <taxon>Eukaryota</taxon>
        <taxon>Metazoa</taxon>
        <taxon>Chordata</taxon>
        <taxon>Craniata</taxon>
        <taxon>Vertebrata</taxon>
        <taxon>Euteleostomi</taxon>
        <taxon>Mammalia</taxon>
        <taxon>Eutheria</taxon>
        <taxon>Euarchontoglires</taxon>
        <taxon>Glires</taxon>
        <taxon>Rodentia</taxon>
        <taxon>Myomorpha</taxon>
        <taxon>Muroidea</taxon>
        <taxon>Muridae</taxon>
        <taxon>Murinae</taxon>
        <taxon>Rattus</taxon>
    </lineage>
</organism>